<proteinExistence type="evidence at protein level"/>
<comment type="function">
    <text evidence="1">Has activity against some Gram-positive bacteria and S.cerevisiae. Has a non-hemolytic activity.</text>
</comment>
<comment type="subcellular location">
    <subcellularLocation>
        <location evidence="5">Secreted</location>
    </subcellularLocation>
</comment>
<comment type="tissue specificity">
    <text evidence="5">Expressed by the venom gland.</text>
</comment>
<comment type="similarity">
    <text evidence="4">Belongs to the ponericin-G family.</text>
</comment>
<accession>P0DSI7</accession>
<organism>
    <name type="scientific">Neoponera apicalis</name>
    <name type="common">Ant</name>
    <name type="synonym">Pachycondyla apicalis</name>
    <dbReference type="NCBI Taxonomy" id="2320211"/>
    <lineage>
        <taxon>Eukaryota</taxon>
        <taxon>Metazoa</taxon>
        <taxon>Ecdysozoa</taxon>
        <taxon>Arthropoda</taxon>
        <taxon>Hexapoda</taxon>
        <taxon>Insecta</taxon>
        <taxon>Pterygota</taxon>
        <taxon>Neoptera</taxon>
        <taxon>Endopterygota</taxon>
        <taxon>Hymenoptera</taxon>
        <taxon>Apocrita</taxon>
        <taxon>Aculeata</taxon>
        <taxon>Formicoidea</taxon>
        <taxon>Formicidae</taxon>
        <taxon>Ponerinae</taxon>
        <taxon>Ponerini</taxon>
        <taxon>Neoponera</taxon>
    </lineage>
</organism>
<dbReference type="GO" id="GO:0005576">
    <property type="term" value="C:extracellular region"/>
    <property type="evidence" value="ECO:0007669"/>
    <property type="project" value="UniProtKB-SubCell"/>
</dbReference>
<dbReference type="GO" id="GO:0042742">
    <property type="term" value="P:defense response to bacterium"/>
    <property type="evidence" value="ECO:0007669"/>
    <property type="project" value="UniProtKB-KW"/>
</dbReference>
<dbReference type="InterPro" id="IPR010002">
    <property type="entry name" value="Poneritoxin"/>
</dbReference>
<dbReference type="Pfam" id="PF07442">
    <property type="entry name" value="Ponericin"/>
    <property type="match status" value="1"/>
</dbReference>
<reference key="1">
    <citation type="journal article" date="2014" name="Toxicon">
        <title>Diversity of peptide toxins from stinging ant venoms.</title>
        <authorList>
            <person name="Aili S.R."/>
            <person name="Touchard A."/>
            <person name="Escoubas P."/>
            <person name="Padula M.P."/>
            <person name="Orivel J."/>
            <person name="Dejean A."/>
            <person name="Nicholson G.M."/>
        </authorList>
    </citation>
    <scope>REVIEW</scope>
    <scope>PROTEIN SEQUENCE</scope>
</reference>
<reference key="2">
    <citation type="journal article" date="2016" name="Toxins">
        <title>The biochemical toxin arsenal from ant venoms.</title>
        <authorList>
            <person name="Touchard A."/>
            <person name="Aili S.R."/>
            <person name="Fox E.G."/>
            <person name="Escoubas P."/>
            <person name="Orivel J."/>
            <person name="Nicholson G.M."/>
            <person name="Dejean A."/>
        </authorList>
    </citation>
    <scope>REVIEW</scope>
    <scope>NOMENCLATURE</scope>
</reference>
<feature type="peptide" id="PRO_0000447057" description="U1-poneritoxin-Na3a" evidence="5">
    <location>
        <begin position="1"/>
        <end position="27"/>
    </location>
</feature>
<protein>
    <recommendedName>
        <fullName evidence="3">U1-poneritoxin-Na3a</fullName>
        <shortName evidence="3">U1-PONTX-Na3a</shortName>
    </recommendedName>
    <alternativeName>
        <fullName evidence="4">Poneratoxin</fullName>
    </alternativeName>
    <alternativeName>
        <fullName evidence="2">Ponericin Pa I1</fullName>
    </alternativeName>
</protein>
<name>GTX3A_NEOAP</name>
<evidence type="ECO:0000250" key="1">
    <source>
        <dbReference type="UniProtKB" id="P82417"/>
    </source>
</evidence>
<evidence type="ECO:0000303" key="2">
    <source>
    </source>
</evidence>
<evidence type="ECO:0000303" key="3">
    <source>
    </source>
</evidence>
<evidence type="ECO:0000305" key="4"/>
<evidence type="ECO:0000305" key="5">
    <source>
    </source>
</evidence>
<keyword id="KW-0044">Antibiotic</keyword>
<keyword id="KW-0929">Antimicrobial</keyword>
<keyword id="KW-0903">Direct protein sequencing</keyword>
<keyword id="KW-0964">Secreted</keyword>
<sequence>GFKDWMKKAGSWLKKKGPALIKAAMQE</sequence>